<name>RPOC_THEAQ</name>
<evidence type="ECO:0000255" key="1">
    <source>
        <dbReference type="HAMAP-Rule" id="MF_01322"/>
    </source>
</evidence>
<evidence type="ECO:0000256" key="2">
    <source>
        <dbReference type="SAM" id="MobiDB-lite"/>
    </source>
</evidence>
<evidence type="ECO:0007829" key="3">
    <source>
        <dbReference type="PDB" id="1HQM"/>
    </source>
</evidence>
<evidence type="ECO:0007829" key="4">
    <source>
        <dbReference type="PDB" id="1I6V"/>
    </source>
</evidence>
<evidence type="ECO:0007829" key="5">
    <source>
        <dbReference type="PDB" id="1YNJ"/>
    </source>
</evidence>
<evidence type="ECO:0007829" key="6">
    <source>
        <dbReference type="PDB" id="1YNN"/>
    </source>
</evidence>
<evidence type="ECO:0007829" key="7">
    <source>
        <dbReference type="PDB" id="5TJG"/>
    </source>
</evidence>
<dbReference type="EC" id="2.7.7.6" evidence="1"/>
<dbReference type="EMBL" id="Y19223">
    <property type="protein sequence ID" value="CAB65466.3"/>
    <property type="molecule type" value="Genomic_DNA"/>
</dbReference>
<dbReference type="PDB" id="1HQM">
    <property type="method" value="X-ray"/>
    <property type="resolution" value="3.30 A"/>
    <property type="chains" value="D=1-1524"/>
</dbReference>
<dbReference type="PDB" id="1I6V">
    <property type="method" value="X-ray"/>
    <property type="resolution" value="3.30 A"/>
    <property type="chains" value="D=1-1524"/>
</dbReference>
<dbReference type="PDB" id="1L9U">
    <property type="method" value="X-ray"/>
    <property type="resolution" value="4.00 A"/>
    <property type="chains" value="D/M=1-1524"/>
</dbReference>
<dbReference type="PDB" id="1L9Z">
    <property type="method" value="X-ray"/>
    <property type="resolution" value="6.50 A"/>
    <property type="chains" value="D=1-1524"/>
</dbReference>
<dbReference type="PDB" id="1YNJ">
    <property type="method" value="X-ray"/>
    <property type="resolution" value="3.20 A"/>
    <property type="chains" value="D/J=1-1524"/>
</dbReference>
<dbReference type="PDB" id="1YNN">
    <property type="method" value="X-ray"/>
    <property type="resolution" value="3.30 A"/>
    <property type="chains" value="D/J=1-1524"/>
</dbReference>
<dbReference type="PDB" id="2AUJ">
    <property type="method" value="X-ray"/>
    <property type="resolution" value="2.70 A"/>
    <property type="chains" value="D=151-455"/>
</dbReference>
<dbReference type="PDB" id="2GHO">
    <property type="method" value="X-ray"/>
    <property type="resolution" value="5.00 A"/>
    <property type="chains" value="D=1-158, D=452-1524"/>
</dbReference>
<dbReference type="PDB" id="4XLN">
    <property type="method" value="X-ray"/>
    <property type="resolution" value="4.00 A"/>
    <property type="chains" value="D/J=1-1524"/>
</dbReference>
<dbReference type="PDB" id="4XLP">
    <property type="method" value="X-ray"/>
    <property type="resolution" value="4.00 A"/>
    <property type="chains" value="D/J=1-1524"/>
</dbReference>
<dbReference type="PDB" id="4XLQ">
    <property type="method" value="X-ray"/>
    <property type="resolution" value="4.60 A"/>
    <property type="chains" value="D/J=1-1524"/>
</dbReference>
<dbReference type="PDB" id="4XLR">
    <property type="method" value="X-ray"/>
    <property type="resolution" value="4.30 A"/>
    <property type="chains" value="D/J=1-1524"/>
</dbReference>
<dbReference type="PDB" id="4XLS">
    <property type="method" value="X-ray"/>
    <property type="resolution" value="4.01 A"/>
    <property type="chains" value="D/J=1-1524"/>
</dbReference>
<dbReference type="PDB" id="5TJG">
    <property type="method" value="X-ray"/>
    <property type="resolution" value="2.60 A"/>
    <property type="chains" value="D=1-1524"/>
</dbReference>
<dbReference type="PDBsum" id="1HQM"/>
<dbReference type="PDBsum" id="1I6V"/>
<dbReference type="PDBsum" id="1L9U"/>
<dbReference type="PDBsum" id="1L9Z"/>
<dbReference type="PDBsum" id="1YNJ"/>
<dbReference type="PDBsum" id="1YNN"/>
<dbReference type="PDBsum" id="2AUJ"/>
<dbReference type="PDBsum" id="2GHO"/>
<dbReference type="PDBsum" id="4XLN"/>
<dbReference type="PDBsum" id="4XLP"/>
<dbReference type="PDBsum" id="4XLQ"/>
<dbReference type="PDBsum" id="4XLR"/>
<dbReference type="PDBsum" id="4XLS"/>
<dbReference type="PDBsum" id="5TJG"/>
<dbReference type="SMR" id="Q9KWU6"/>
<dbReference type="EvolutionaryTrace" id="Q9KWU6"/>
<dbReference type="GO" id="GO:0000428">
    <property type="term" value="C:DNA-directed RNA polymerase complex"/>
    <property type="evidence" value="ECO:0007669"/>
    <property type="project" value="UniProtKB-KW"/>
</dbReference>
<dbReference type="GO" id="GO:0003677">
    <property type="term" value="F:DNA binding"/>
    <property type="evidence" value="ECO:0007669"/>
    <property type="project" value="UniProtKB-UniRule"/>
</dbReference>
<dbReference type="GO" id="GO:0003899">
    <property type="term" value="F:DNA-directed RNA polymerase activity"/>
    <property type="evidence" value="ECO:0007669"/>
    <property type="project" value="UniProtKB-UniRule"/>
</dbReference>
<dbReference type="GO" id="GO:0000287">
    <property type="term" value="F:magnesium ion binding"/>
    <property type="evidence" value="ECO:0007669"/>
    <property type="project" value="UniProtKB-UniRule"/>
</dbReference>
<dbReference type="GO" id="GO:0008270">
    <property type="term" value="F:zinc ion binding"/>
    <property type="evidence" value="ECO:0007669"/>
    <property type="project" value="UniProtKB-UniRule"/>
</dbReference>
<dbReference type="GO" id="GO:0006351">
    <property type="term" value="P:DNA-templated transcription"/>
    <property type="evidence" value="ECO:0007669"/>
    <property type="project" value="UniProtKB-UniRule"/>
</dbReference>
<dbReference type="CDD" id="cd02655">
    <property type="entry name" value="RNAP_beta'_C"/>
    <property type="match status" value="1"/>
</dbReference>
<dbReference type="CDD" id="cd01609">
    <property type="entry name" value="RNAP_beta'_N"/>
    <property type="match status" value="1"/>
</dbReference>
<dbReference type="Gene3D" id="1.10.132.30">
    <property type="match status" value="1"/>
</dbReference>
<dbReference type="Gene3D" id="1.10.150.390">
    <property type="match status" value="1"/>
</dbReference>
<dbReference type="Gene3D" id="1.10.1790.20">
    <property type="match status" value="1"/>
</dbReference>
<dbReference type="Gene3D" id="1.10.40.90">
    <property type="match status" value="1"/>
</dbReference>
<dbReference type="Gene3D" id="2.40.40.20">
    <property type="match status" value="1"/>
</dbReference>
<dbReference type="Gene3D" id="2.40.50.100">
    <property type="match status" value="4"/>
</dbReference>
<dbReference type="Gene3D" id="6.10.250.1410">
    <property type="match status" value="1"/>
</dbReference>
<dbReference type="Gene3D" id="3.90.105.10">
    <property type="entry name" value="Molybdopterin biosynthesis moea protein, domain 2"/>
    <property type="match status" value="1"/>
</dbReference>
<dbReference type="Gene3D" id="4.10.860.120">
    <property type="entry name" value="RNA polymerase II, clamp domain"/>
    <property type="match status" value="1"/>
</dbReference>
<dbReference type="Gene3D" id="1.10.274.100">
    <property type="entry name" value="RNA polymerase Rpb1, domain 3"/>
    <property type="match status" value="1"/>
</dbReference>
<dbReference type="HAMAP" id="MF_01322">
    <property type="entry name" value="RNApol_bact_RpoC"/>
    <property type="match status" value="1"/>
</dbReference>
<dbReference type="InterPro" id="IPR045867">
    <property type="entry name" value="DNA-dir_RpoC_beta_prime"/>
</dbReference>
<dbReference type="InterPro" id="IPR012754">
    <property type="entry name" value="DNA-dir_RpoC_beta_prime_bact"/>
</dbReference>
<dbReference type="InterPro" id="IPR000722">
    <property type="entry name" value="RNA_pol_asu"/>
</dbReference>
<dbReference type="InterPro" id="IPR006592">
    <property type="entry name" value="RNA_pol_N"/>
</dbReference>
<dbReference type="InterPro" id="IPR007080">
    <property type="entry name" value="RNA_pol_Rpb1_1"/>
</dbReference>
<dbReference type="InterPro" id="IPR007066">
    <property type="entry name" value="RNA_pol_Rpb1_3"/>
</dbReference>
<dbReference type="InterPro" id="IPR042102">
    <property type="entry name" value="RNA_pol_Rpb1_3_sf"/>
</dbReference>
<dbReference type="InterPro" id="IPR007083">
    <property type="entry name" value="RNA_pol_Rpb1_4"/>
</dbReference>
<dbReference type="InterPro" id="IPR007081">
    <property type="entry name" value="RNA_pol_Rpb1_5"/>
</dbReference>
<dbReference type="InterPro" id="IPR044893">
    <property type="entry name" value="RNA_pol_Rpb1_clamp_domain"/>
</dbReference>
<dbReference type="InterPro" id="IPR038120">
    <property type="entry name" value="Rpb1_funnel_sf"/>
</dbReference>
<dbReference type="InterPro" id="IPR048566">
    <property type="entry name" value="RpoC_hybrid"/>
</dbReference>
<dbReference type="PANTHER" id="PTHR19376">
    <property type="entry name" value="DNA-DIRECTED RNA POLYMERASE"/>
    <property type="match status" value="1"/>
</dbReference>
<dbReference type="PANTHER" id="PTHR19376:SF54">
    <property type="entry name" value="DNA-DIRECTED RNA POLYMERASE SUBUNIT BETA"/>
    <property type="match status" value="1"/>
</dbReference>
<dbReference type="Pfam" id="PF04997">
    <property type="entry name" value="RNA_pol_Rpb1_1"/>
    <property type="match status" value="2"/>
</dbReference>
<dbReference type="Pfam" id="PF00623">
    <property type="entry name" value="RNA_pol_Rpb1_2"/>
    <property type="match status" value="1"/>
</dbReference>
<dbReference type="Pfam" id="PF04983">
    <property type="entry name" value="RNA_pol_Rpb1_3"/>
    <property type="match status" value="1"/>
</dbReference>
<dbReference type="Pfam" id="PF05000">
    <property type="entry name" value="RNA_pol_Rpb1_4"/>
    <property type="match status" value="1"/>
</dbReference>
<dbReference type="Pfam" id="PF04998">
    <property type="entry name" value="RNA_pol_Rpb1_5"/>
    <property type="match status" value="2"/>
</dbReference>
<dbReference type="Pfam" id="PF21668">
    <property type="entry name" value="RPOC_hybrid"/>
    <property type="match status" value="1"/>
</dbReference>
<dbReference type="SMART" id="SM00663">
    <property type="entry name" value="RPOLA_N"/>
    <property type="match status" value="1"/>
</dbReference>
<dbReference type="SUPFAM" id="SSF64484">
    <property type="entry name" value="beta and beta-prime subunits of DNA dependent RNA-polymerase"/>
    <property type="match status" value="1"/>
</dbReference>
<feature type="chain" id="PRO_0000067817" description="DNA-directed RNA polymerase subunit beta'">
    <location>
        <begin position="1"/>
        <end position="1524"/>
    </location>
</feature>
<feature type="region of interest" description="Disordered" evidence="2">
    <location>
        <begin position="1502"/>
        <end position="1524"/>
    </location>
</feature>
<feature type="binding site" evidence="1">
    <location>
        <position position="58"/>
    </location>
    <ligand>
        <name>Zn(2+)</name>
        <dbReference type="ChEBI" id="CHEBI:29105"/>
        <label>1</label>
    </ligand>
</feature>
<feature type="binding site" evidence="1">
    <location>
        <position position="60"/>
    </location>
    <ligand>
        <name>Zn(2+)</name>
        <dbReference type="ChEBI" id="CHEBI:29105"/>
        <label>1</label>
    </ligand>
</feature>
<feature type="binding site" evidence="1">
    <location>
        <position position="73"/>
    </location>
    <ligand>
        <name>Zn(2+)</name>
        <dbReference type="ChEBI" id="CHEBI:29105"/>
        <label>1</label>
    </ligand>
</feature>
<feature type="binding site" evidence="1">
    <location>
        <position position="76"/>
    </location>
    <ligand>
        <name>Zn(2+)</name>
        <dbReference type="ChEBI" id="CHEBI:29105"/>
        <label>1</label>
    </ligand>
</feature>
<feature type="binding site" evidence="1">
    <location>
        <position position="739"/>
    </location>
    <ligand>
        <name>Mg(2+)</name>
        <dbReference type="ChEBI" id="CHEBI:18420"/>
    </ligand>
</feature>
<feature type="binding site" evidence="1">
    <location>
        <position position="741"/>
    </location>
    <ligand>
        <name>Mg(2+)</name>
        <dbReference type="ChEBI" id="CHEBI:18420"/>
    </ligand>
</feature>
<feature type="binding site" evidence="1">
    <location>
        <position position="743"/>
    </location>
    <ligand>
        <name>Mg(2+)</name>
        <dbReference type="ChEBI" id="CHEBI:18420"/>
    </ligand>
</feature>
<feature type="binding site" evidence="1">
    <location>
        <position position="1112"/>
    </location>
    <ligand>
        <name>Zn(2+)</name>
        <dbReference type="ChEBI" id="CHEBI:29105"/>
        <label>2</label>
    </ligand>
</feature>
<feature type="binding site" evidence="1">
    <location>
        <position position="1194"/>
    </location>
    <ligand>
        <name>Zn(2+)</name>
        <dbReference type="ChEBI" id="CHEBI:29105"/>
        <label>2</label>
    </ligand>
</feature>
<feature type="binding site" evidence="1">
    <location>
        <position position="1201"/>
    </location>
    <ligand>
        <name>Zn(2+)</name>
        <dbReference type="ChEBI" id="CHEBI:29105"/>
        <label>2</label>
    </ligand>
</feature>
<feature type="binding site" evidence="1">
    <location>
        <position position="1204"/>
    </location>
    <ligand>
        <name>Zn(2+)</name>
        <dbReference type="ChEBI" id="CHEBI:29105"/>
        <label>2</label>
    </ligand>
</feature>
<feature type="strand" evidence="7">
    <location>
        <begin position="7"/>
        <end position="12"/>
    </location>
</feature>
<feature type="helix" evidence="7">
    <location>
        <begin position="15"/>
        <end position="21"/>
    </location>
</feature>
<feature type="strand" evidence="7">
    <location>
        <begin position="22"/>
        <end position="25"/>
    </location>
</feature>
<feature type="turn" evidence="7">
    <location>
        <begin position="34"/>
        <end position="36"/>
    </location>
</feature>
<feature type="strand" evidence="5">
    <location>
        <begin position="41"/>
        <end position="43"/>
    </location>
</feature>
<feature type="helix" evidence="7">
    <location>
        <begin position="47"/>
        <end position="50"/>
    </location>
</feature>
<feature type="strand" evidence="5">
    <location>
        <begin position="53"/>
        <end position="57"/>
    </location>
</feature>
<feature type="strand" evidence="7">
    <location>
        <begin position="59"/>
        <end position="62"/>
    </location>
</feature>
<feature type="helix" evidence="7">
    <location>
        <begin position="66"/>
        <end position="68"/>
    </location>
</feature>
<feature type="turn" evidence="7">
    <location>
        <begin position="74"/>
        <end position="76"/>
    </location>
</feature>
<feature type="helix" evidence="7">
    <location>
        <begin position="83"/>
        <end position="87"/>
    </location>
</feature>
<feature type="strand" evidence="7">
    <location>
        <begin position="90"/>
        <end position="100"/>
    </location>
</feature>
<feature type="helix" evidence="7">
    <location>
        <begin position="103"/>
        <end position="106"/>
    </location>
</feature>
<feature type="strand" evidence="7">
    <location>
        <begin position="107"/>
        <end position="109"/>
    </location>
</feature>
<feature type="helix" evidence="7">
    <location>
        <begin position="111"/>
        <end position="116"/>
    </location>
</feature>
<feature type="helix" evidence="7">
    <location>
        <begin position="120"/>
        <end position="127"/>
    </location>
</feature>
<feature type="strand" evidence="5">
    <location>
        <begin position="128"/>
        <end position="131"/>
    </location>
</feature>
<feature type="strand" evidence="7">
    <location>
        <begin position="132"/>
        <end position="136"/>
    </location>
</feature>
<feature type="strand" evidence="5">
    <location>
        <begin position="142"/>
        <end position="146"/>
    </location>
</feature>
<feature type="helix" evidence="3">
    <location>
        <begin position="150"/>
        <end position="153"/>
    </location>
</feature>
<feature type="helix" evidence="7">
    <location>
        <begin position="155"/>
        <end position="163"/>
    </location>
</feature>
<feature type="strand" evidence="7">
    <location>
        <begin position="166"/>
        <end position="170"/>
    </location>
</feature>
<feature type="strand" evidence="7">
    <location>
        <begin position="183"/>
        <end position="185"/>
    </location>
</feature>
<feature type="strand" evidence="7">
    <location>
        <begin position="190"/>
        <end position="192"/>
    </location>
</feature>
<feature type="strand" evidence="7">
    <location>
        <begin position="199"/>
        <end position="205"/>
    </location>
</feature>
<feature type="strand" evidence="7">
    <location>
        <begin position="208"/>
        <end position="226"/>
    </location>
</feature>
<feature type="turn" evidence="7">
    <location>
        <begin position="227"/>
        <end position="229"/>
    </location>
</feature>
<feature type="strand" evidence="7">
    <location>
        <begin position="234"/>
        <end position="236"/>
    </location>
</feature>
<feature type="strand" evidence="7">
    <location>
        <begin position="241"/>
        <end position="244"/>
    </location>
</feature>
<feature type="strand" evidence="7">
    <location>
        <begin position="249"/>
        <end position="252"/>
    </location>
</feature>
<feature type="strand" evidence="7">
    <location>
        <begin position="257"/>
        <end position="263"/>
    </location>
</feature>
<feature type="strand" evidence="7">
    <location>
        <begin position="268"/>
        <end position="274"/>
    </location>
</feature>
<feature type="strand" evidence="7">
    <location>
        <begin position="277"/>
        <end position="284"/>
    </location>
</feature>
<feature type="strand" evidence="7">
    <location>
        <begin position="286"/>
        <end position="290"/>
    </location>
</feature>
<feature type="strand" evidence="7">
    <location>
        <begin position="303"/>
        <end position="312"/>
    </location>
</feature>
<feature type="strand" evidence="7">
    <location>
        <begin position="317"/>
        <end position="321"/>
    </location>
</feature>
<feature type="strand" evidence="6">
    <location>
        <begin position="323"/>
        <end position="327"/>
    </location>
</feature>
<feature type="strand" evidence="7">
    <location>
        <begin position="330"/>
        <end position="346"/>
    </location>
</feature>
<feature type="strand" evidence="7">
    <location>
        <begin position="351"/>
        <end position="353"/>
    </location>
</feature>
<feature type="strand" evidence="7">
    <location>
        <begin position="359"/>
        <end position="361"/>
    </location>
</feature>
<feature type="strand" evidence="7">
    <location>
        <begin position="366"/>
        <end position="372"/>
    </location>
</feature>
<feature type="helix" evidence="7">
    <location>
        <begin position="373"/>
        <end position="375"/>
    </location>
</feature>
<feature type="strand" evidence="7">
    <location>
        <begin position="380"/>
        <end position="387"/>
    </location>
</feature>
<feature type="strand" evidence="7">
    <location>
        <begin position="390"/>
        <end position="402"/>
    </location>
</feature>
<feature type="strand" evidence="7">
    <location>
        <begin position="420"/>
        <end position="422"/>
    </location>
</feature>
<feature type="helix" evidence="7">
    <location>
        <begin position="423"/>
        <end position="425"/>
    </location>
</feature>
<feature type="strand" evidence="7">
    <location>
        <begin position="433"/>
        <end position="438"/>
    </location>
</feature>
<feature type="turn" evidence="7">
    <location>
        <begin position="439"/>
        <end position="442"/>
    </location>
</feature>
<feature type="strand" evidence="7">
    <location>
        <begin position="443"/>
        <end position="447"/>
    </location>
</feature>
<feature type="strand" evidence="7">
    <location>
        <begin position="453"/>
        <end position="455"/>
    </location>
</feature>
<feature type="helix" evidence="7">
    <location>
        <begin position="457"/>
        <end position="467"/>
    </location>
</feature>
<feature type="helix" evidence="7">
    <location>
        <begin position="470"/>
        <end position="478"/>
    </location>
</feature>
<feature type="turn" evidence="7">
    <location>
        <begin position="479"/>
        <end position="482"/>
    </location>
</feature>
<feature type="helix" evidence="7">
    <location>
        <begin position="486"/>
        <end position="505"/>
    </location>
</feature>
<feature type="helix" evidence="7">
    <location>
        <begin position="509"/>
        <end position="512"/>
    </location>
</feature>
<feature type="strand" evidence="7">
    <location>
        <begin position="513"/>
        <end position="519"/>
    </location>
</feature>
<feature type="helix" evidence="7">
    <location>
        <begin position="522"/>
        <end position="524"/>
    </location>
</feature>
<feature type="strand" evidence="7">
    <location>
        <begin position="527"/>
        <end position="529"/>
    </location>
</feature>
<feature type="turn" evidence="5">
    <location>
        <begin position="531"/>
        <end position="533"/>
    </location>
</feature>
<feature type="strand" evidence="7">
    <location>
        <begin position="535"/>
        <end position="537"/>
    </location>
</feature>
<feature type="helix" evidence="7">
    <location>
        <begin position="539"/>
        <end position="558"/>
    </location>
</feature>
<feature type="turn" evidence="7">
    <location>
        <begin position="559"/>
        <end position="561"/>
    </location>
</feature>
<feature type="helix" evidence="7">
    <location>
        <begin position="564"/>
        <end position="583"/>
    </location>
</feature>
<feature type="strand" evidence="7">
    <location>
        <begin position="586"/>
        <end position="589"/>
    </location>
</feature>
<feature type="strand" evidence="4">
    <location>
        <begin position="594"/>
        <end position="596"/>
    </location>
</feature>
<feature type="helix" evidence="7">
    <location>
        <begin position="603"/>
        <end position="607"/>
    </location>
</feature>
<feature type="strand" evidence="7">
    <location>
        <begin position="608"/>
        <end position="612"/>
    </location>
</feature>
<feature type="helix" evidence="7">
    <location>
        <begin position="613"/>
        <end position="616"/>
    </location>
</feature>
<feature type="turn" evidence="7">
    <location>
        <begin position="617"/>
        <end position="619"/>
    </location>
</feature>
<feature type="strand" evidence="7">
    <location>
        <begin position="620"/>
        <end position="632"/>
    </location>
</feature>
<feature type="strand" evidence="7">
    <location>
        <begin position="641"/>
        <end position="645"/>
    </location>
</feature>
<feature type="helix" evidence="7">
    <location>
        <begin position="646"/>
        <end position="652"/>
    </location>
</feature>
<feature type="helix" evidence="7">
    <location>
        <begin position="654"/>
        <end position="663"/>
    </location>
</feature>
<feature type="strand" evidence="7">
    <location>
        <begin position="666"/>
        <end position="669"/>
    </location>
</feature>
<feature type="helix" evidence="7">
    <location>
        <begin position="670"/>
        <end position="680"/>
    </location>
</feature>
<feature type="helix" evidence="7">
    <location>
        <begin position="685"/>
        <end position="695"/>
    </location>
</feature>
<feature type="strand" evidence="7">
    <location>
        <begin position="700"/>
        <end position="703"/>
    </location>
</feature>
<feature type="helix" evidence="7">
    <location>
        <begin position="710"/>
        <end position="712"/>
    </location>
</feature>
<feature type="strand" evidence="7">
    <location>
        <begin position="713"/>
        <end position="728"/>
    </location>
</feature>
<feature type="helix" evidence="7">
    <location>
        <begin position="730"/>
        <end position="732"/>
    </location>
</feature>
<feature type="helix" evidence="7">
    <location>
        <begin position="733"/>
        <end position="736"/>
    </location>
</feature>
<feature type="turn" evidence="7">
    <location>
        <begin position="740"/>
        <end position="742"/>
    </location>
</feature>
<feature type="strand" evidence="7">
    <location>
        <begin position="744"/>
        <end position="748"/>
    </location>
</feature>
<feature type="helix" evidence="7">
    <location>
        <begin position="753"/>
        <end position="761"/>
    </location>
</feature>
<feature type="helix" evidence="7">
    <location>
        <begin position="765"/>
        <end position="767"/>
    </location>
</feature>
<feature type="turn" evidence="7">
    <location>
        <begin position="772"/>
        <end position="774"/>
    </location>
</feature>
<feature type="strand" evidence="7">
    <location>
        <begin position="776"/>
        <end position="779"/>
    </location>
</feature>
<feature type="helix" evidence="7">
    <location>
        <begin position="784"/>
        <end position="793"/>
    </location>
</feature>
<feature type="strand" evidence="7">
    <location>
        <begin position="799"/>
        <end position="803"/>
    </location>
</feature>
<feature type="strand" evidence="7">
    <location>
        <begin position="805"/>
        <end position="808"/>
    </location>
</feature>
<feature type="helix" evidence="7">
    <location>
        <begin position="809"/>
        <end position="817"/>
    </location>
</feature>
<feature type="turn" evidence="6">
    <location>
        <begin position="818"/>
        <end position="821"/>
    </location>
</feature>
<feature type="strand" evidence="5">
    <location>
        <begin position="822"/>
        <end position="825"/>
    </location>
</feature>
<feature type="strand" evidence="7">
    <location>
        <begin position="827"/>
        <end position="829"/>
    </location>
</feature>
<feature type="strand" evidence="7">
    <location>
        <begin position="832"/>
        <end position="834"/>
    </location>
</feature>
<feature type="helix" evidence="7">
    <location>
        <begin position="836"/>
        <end position="840"/>
    </location>
</feature>
<feature type="strand" evidence="7">
    <location>
        <begin position="842"/>
        <end position="845"/>
    </location>
</feature>
<feature type="helix" evidence="7">
    <location>
        <begin position="846"/>
        <end position="854"/>
    </location>
</feature>
<feature type="strand" evidence="5">
    <location>
        <begin position="860"/>
        <end position="862"/>
    </location>
</feature>
<feature type="strand" evidence="7">
    <location>
        <begin position="864"/>
        <end position="868"/>
    </location>
</feature>
<feature type="strand" evidence="7">
    <location>
        <begin position="871"/>
        <end position="875"/>
    </location>
</feature>
<feature type="helix" evidence="7">
    <location>
        <begin position="877"/>
        <end position="890"/>
    </location>
</feature>
<feature type="helix" evidence="7">
    <location>
        <begin position="893"/>
        <end position="899"/>
    </location>
</feature>
<feature type="helix" evidence="7">
    <location>
        <begin position="908"/>
        <end position="921"/>
    </location>
</feature>
<feature type="helix" evidence="7">
    <location>
        <begin position="924"/>
        <end position="945"/>
    </location>
</feature>
<feature type="helix" evidence="7">
    <location>
        <begin position="951"/>
        <end position="953"/>
    </location>
</feature>
<feature type="helix" evidence="7">
    <location>
        <begin position="959"/>
        <end position="979"/>
    </location>
</feature>
<feature type="strand" evidence="5">
    <location>
        <begin position="981"/>
        <end position="983"/>
    </location>
</feature>
<feature type="helix" evidence="7">
    <location>
        <begin position="985"/>
        <end position="1014"/>
    </location>
</feature>
<feature type="strand" evidence="3">
    <location>
        <begin position="1016"/>
        <end position="1018"/>
    </location>
</feature>
<feature type="helix" evidence="7">
    <location>
        <begin position="1019"/>
        <end position="1025"/>
    </location>
</feature>
<feature type="strand" evidence="5">
    <location>
        <begin position="1026"/>
        <end position="1029"/>
    </location>
</feature>
<feature type="helix" evidence="7">
    <location>
        <begin position="1032"/>
        <end position="1039"/>
    </location>
</feature>
<feature type="strand" evidence="6">
    <location>
        <begin position="1043"/>
        <end position="1046"/>
    </location>
</feature>
<feature type="strand" evidence="7">
    <location>
        <begin position="1050"/>
        <end position="1052"/>
    </location>
</feature>
<feature type="turn" evidence="7">
    <location>
        <begin position="1061"/>
        <end position="1063"/>
    </location>
</feature>
<feature type="helix" evidence="7">
    <location>
        <begin position="1067"/>
        <end position="1083"/>
    </location>
</feature>
<feature type="helix" evidence="3">
    <location>
        <begin position="1086"/>
        <end position="1089"/>
    </location>
</feature>
<feature type="strand" evidence="5">
    <location>
        <begin position="1090"/>
        <end position="1092"/>
    </location>
</feature>
<feature type="helix" evidence="7">
    <location>
        <begin position="1094"/>
        <end position="1102"/>
    </location>
</feature>
<feature type="strand" evidence="7">
    <location>
        <begin position="1106"/>
        <end position="1110"/>
    </location>
</feature>
<feature type="strand" evidence="7">
    <location>
        <begin position="1118"/>
        <end position="1126"/>
    </location>
</feature>
<feature type="strand" evidence="7">
    <location>
        <begin position="1129"/>
        <end position="1134"/>
    </location>
</feature>
<feature type="helix" evidence="7">
    <location>
        <begin position="1137"/>
        <end position="1144"/>
    </location>
</feature>
<feature type="strand" evidence="7">
    <location>
        <begin position="1148"/>
        <end position="1151"/>
    </location>
</feature>
<feature type="strand" evidence="7">
    <location>
        <begin position="1153"/>
        <end position="1155"/>
    </location>
</feature>
<feature type="strand" evidence="7">
    <location>
        <begin position="1158"/>
        <end position="1160"/>
    </location>
</feature>
<feature type="helix" evidence="7">
    <location>
        <begin position="1168"/>
        <end position="1179"/>
    </location>
</feature>
<feature type="strand" evidence="7">
    <location>
        <begin position="1184"/>
        <end position="1189"/>
    </location>
</feature>
<feature type="helix" evidence="7">
    <location>
        <begin position="1191"/>
        <end position="1193"/>
    </location>
</feature>
<feature type="strand" evidence="7">
    <location>
        <begin position="1199"/>
        <end position="1201"/>
    </location>
</feature>
<feature type="turn" evidence="7">
    <location>
        <begin position="1202"/>
        <end position="1204"/>
    </location>
</feature>
<feature type="turn" evidence="7">
    <location>
        <begin position="1209"/>
        <end position="1211"/>
    </location>
</feature>
<feature type="strand" evidence="7">
    <location>
        <begin position="1212"/>
        <end position="1214"/>
    </location>
</feature>
<feature type="helix" evidence="7">
    <location>
        <begin position="1221"/>
        <end position="1230"/>
    </location>
</feature>
<feature type="helix" evidence="7">
    <location>
        <begin position="1231"/>
        <end position="1235"/>
    </location>
</feature>
<feature type="helix" evidence="7">
    <location>
        <begin position="1256"/>
        <end position="1263"/>
    </location>
</feature>
<feature type="strand" evidence="7">
    <location>
        <begin position="1269"/>
        <end position="1271"/>
    </location>
</feature>
<feature type="strand" evidence="3">
    <location>
        <begin position="1276"/>
        <end position="1278"/>
    </location>
</feature>
<feature type="strand" evidence="7">
    <location>
        <begin position="1279"/>
        <end position="1284"/>
    </location>
</feature>
<feature type="strand" evidence="5">
    <location>
        <begin position="1286"/>
        <end position="1288"/>
    </location>
</feature>
<feature type="strand" evidence="7">
    <location>
        <begin position="1290"/>
        <end position="1295"/>
    </location>
</feature>
<feature type="strand" evidence="7">
    <location>
        <begin position="1300"/>
        <end position="1305"/>
    </location>
</feature>
<feature type="strand" evidence="7">
    <location>
        <begin position="1324"/>
        <end position="1329"/>
    </location>
</feature>
<feature type="helix" evidence="7">
    <location>
        <begin position="1332"/>
        <end position="1339"/>
    </location>
</feature>
<feature type="helix" evidence="7">
    <location>
        <begin position="1341"/>
        <end position="1358"/>
    </location>
</feature>
<feature type="helix" evidence="7">
    <location>
        <begin position="1365"/>
        <end position="1374"/>
    </location>
</feature>
<feature type="strand" evidence="7">
    <location>
        <begin position="1378"/>
        <end position="1383"/>
    </location>
</feature>
<feature type="strand" evidence="5">
    <location>
        <begin position="1385"/>
        <end position="1387"/>
    </location>
</feature>
<feature type="strand" evidence="7">
    <location>
        <begin position="1394"/>
        <end position="1396"/>
    </location>
</feature>
<feature type="helix" evidence="7">
    <location>
        <begin position="1397"/>
        <end position="1407"/>
    </location>
</feature>
<feature type="turn" evidence="7">
    <location>
        <begin position="1408"/>
        <end position="1411"/>
    </location>
</feature>
<feature type="strand" evidence="7">
    <location>
        <begin position="1416"/>
        <end position="1419"/>
    </location>
</feature>
<feature type="helix" evidence="7">
    <location>
        <begin position="1424"/>
        <end position="1429"/>
    </location>
</feature>
<feature type="strand" evidence="4">
    <location>
        <begin position="1430"/>
        <end position="1432"/>
    </location>
</feature>
<feature type="helix" evidence="7">
    <location>
        <begin position="1434"/>
        <end position="1438"/>
    </location>
</feature>
<feature type="helix" evidence="7">
    <location>
        <begin position="1443"/>
        <end position="1453"/>
    </location>
</feature>
<feature type="helix" evidence="7">
    <location>
        <begin position="1462"/>
        <end position="1468"/>
    </location>
</feature>
<feature type="helix" evidence="7">
    <location>
        <begin position="1475"/>
        <end position="1477"/>
    </location>
</feature>
<feature type="turn" evidence="7">
    <location>
        <begin position="1479"/>
        <end position="1483"/>
    </location>
</feature>
<feature type="strand" evidence="7">
    <location>
        <begin position="1484"/>
        <end position="1488"/>
    </location>
</feature>
<feature type="helix" evidence="7">
    <location>
        <begin position="1489"/>
        <end position="1496"/>
    </location>
</feature>
<feature type="turn" evidence="5">
    <location>
        <begin position="1497"/>
        <end position="1499"/>
    </location>
</feature>
<protein>
    <recommendedName>
        <fullName evidence="1">DNA-directed RNA polymerase subunit beta'</fullName>
        <shortName evidence="1">RNAP subunit beta'</shortName>
        <ecNumber evidence="1">2.7.7.6</ecNumber>
    </recommendedName>
    <alternativeName>
        <fullName evidence="1">RNA polymerase subunit beta'</fullName>
    </alternativeName>
    <alternativeName>
        <fullName evidence="1">Transcriptase subunit beta'</fullName>
    </alternativeName>
</protein>
<sequence length="1524" mass="170944">MKKEVRKVRIALASPEKIRSWSYGEVEKPETINYRTLKPERDGLFDERIFGPIKDYECACGKYKRQRFEGKVCERCGVEVTRSIVRRYRMGHIELATPAAHIWFVKDVPSKIGTLLDLSATELEQVLYFNKYIVLDPKGAVLDGVPVEKRQLLTDEEYRELRYGKQETYPLPAGVDALVKDGEEVVKGQELAPGVVSRMDGVALYRFPRRVRVDYLRKERAALRIPLSAWVEKEAYRPGEVLAELSEPYLFRAEESGVVELKDLAEGHLIYLRQEEEVVARYFLPAGMTPLVVEGEIVEVGQPLAEGKGLLRLPRHMTAKEVEAEEEGDSVHLTLFLEWTEPKDYKVAPHMNVIVPEGAKVQAGEKIVAAIDPEEEVIAEAEGVVHLHEPASILVVKARVYPFEDDVEVTTGDRVAPGDVLADGGKVKSEIYGRVEVDLVRNVVRVVESYDIDARMGAEAIQELLKELDLEKLERELLEEMKHPSRARRAKARKRLEVVRAFLDSGNRPEWMILEAVPVLPPDLRPMVQVDGGRFATSDLNDLYRRLINRNNRLKKLLAQGAPEIIIRNEKRMLQEAVDAVIDNGRRGSPVTNPGSERPLRSLTDILSGKQGRFRQNLLGKRVDYSGRSVIVVGPQLKLHQCGLPKRMALELFKPFLLKKMEEKAFAPNVKAARRMLERQRDIKDEVWDALEEVIHGKVVLLNRAPTLHRLGIQAFQPVLVEGQSIQLHPLVCEAFNADFDGDQMAVHVPLSSFAQAEARIQMLSAHNLLSPASGEPLAKPSRDIILGLYYITQVRKEKKGAGMAFATPEEALAAYERGEVALNAPIVVAGRETSVGRLKFVFANPDEALLAVAHGLLDLQDVVTVRYLGRRLETSPGRILFARIVGEAVGDEKVAQELIQMDVPQEKNSLKDLVYQAFLRLGMEKTARLLDALKYYGFTLSTTSGITIGIDDAVIPEEKQRYLEEADRKLRQIEQAYEMGFLTDRERYDQVIQLWTETTEKVTQAVFKNFEENYPFNPLYVMAQSGARGNPQQIRQLCGMRGLMQKPSGETFEVPVRSSFREGLTVLEYFISSHGARKGGADTALRTADSGYLTRKLVDVAHEIVVREADCGTTNYISVPLFQMDEVTRTLRLRKRSDIESGLYGRVLAREVEALGRRLEEGRYLSLEDVHFLIKAAEAGEVREVPVRSPLTCQTRYGVCQKCYGYDLSMARPVSIGEAVGVVAAESIGEPGTQLTMRTFHTGGVAVGTDITQGLPRVIELFEARRPKAKAVISEIDGVVRIEEGEDRLSVFVESEGFSKEYKLPKDARLLVKDGDYVEAGQPLTRGAIDPHQLLEAKGPEAVERYLVDEIQKVYRAQGVKLHDKHIEIVVRQMLKYVEVTDPGDSRLLEGQVLEKWDVEALNERLIAEGKVPVAWKPLLMGVTKSALSTKSWLSAASFQNTTHVLTEAAIAGKKDELIGLKENVILGRLIPAGTGSDFVRFTQVVDQRTLKAIEEARKEAVEAKEKEAPRRPVRREQPGKGL</sequence>
<proteinExistence type="evidence at protein level"/>
<accession>Q9KWU6</accession>
<comment type="function">
    <text evidence="1">DNA-dependent RNA polymerase catalyzes the transcription of DNA into RNA using the four ribonucleoside triphosphates as substrates.</text>
</comment>
<comment type="catalytic activity">
    <reaction evidence="1">
        <text>RNA(n) + a ribonucleoside 5'-triphosphate = RNA(n+1) + diphosphate</text>
        <dbReference type="Rhea" id="RHEA:21248"/>
        <dbReference type="Rhea" id="RHEA-COMP:14527"/>
        <dbReference type="Rhea" id="RHEA-COMP:17342"/>
        <dbReference type="ChEBI" id="CHEBI:33019"/>
        <dbReference type="ChEBI" id="CHEBI:61557"/>
        <dbReference type="ChEBI" id="CHEBI:140395"/>
        <dbReference type="EC" id="2.7.7.6"/>
    </reaction>
</comment>
<comment type="cofactor">
    <cofactor evidence="1">
        <name>Mg(2+)</name>
        <dbReference type="ChEBI" id="CHEBI:18420"/>
    </cofactor>
    <text evidence="1">Binds 1 Mg(2+) ion per subunit.</text>
</comment>
<comment type="cofactor">
    <cofactor evidence="1">
        <name>Zn(2+)</name>
        <dbReference type="ChEBI" id="CHEBI:29105"/>
    </cofactor>
    <text evidence="1">Binds 2 Zn(2+) ions per subunit.</text>
</comment>
<comment type="subunit">
    <text evidence="1">The RNAP catalytic core consists of 2 alpha, 1 beta, 1 beta' and 1 omega subunit. When a sigma factor is associated with the core the holoenzyme is formed, which can initiate transcription.</text>
</comment>
<comment type="similarity">
    <text evidence="1">Belongs to the RNA polymerase beta' chain family.</text>
</comment>
<organism>
    <name type="scientific">Thermus aquaticus</name>
    <dbReference type="NCBI Taxonomy" id="271"/>
    <lineage>
        <taxon>Bacteria</taxon>
        <taxon>Thermotogati</taxon>
        <taxon>Deinococcota</taxon>
        <taxon>Deinococci</taxon>
        <taxon>Thermales</taxon>
        <taxon>Thermaceae</taxon>
        <taxon>Thermus</taxon>
    </lineage>
</organism>
<reference key="1">
    <citation type="journal article" date="1999" name="Cell">
        <title>Crystal structure of Thermus aquaticus core RNA polymerase at 3.3 A resolution.</title>
        <authorList>
            <person name="Zhang G."/>
            <person name="Campbell E.A."/>
            <person name="Minakhin L."/>
            <person name="Richter C."/>
            <person name="Severinov K."/>
            <person name="Darst S.A."/>
        </authorList>
    </citation>
    <scope>NUCLEOTIDE SEQUENCE [GENOMIC DNA]</scope>
    <scope>X-RAY CRYSTALLOGRAPHY (3.3 ANGSTROMS)</scope>
</reference>
<keyword id="KW-0002">3D-structure</keyword>
<keyword id="KW-0240">DNA-directed RNA polymerase</keyword>
<keyword id="KW-0460">Magnesium</keyword>
<keyword id="KW-0479">Metal-binding</keyword>
<keyword id="KW-0548">Nucleotidyltransferase</keyword>
<keyword id="KW-0804">Transcription</keyword>
<keyword id="KW-0808">Transferase</keyword>
<keyword id="KW-0862">Zinc</keyword>
<gene>
    <name evidence="1" type="primary">rpoC</name>
</gene>